<comment type="function">
    <text evidence="1">Type IV dipeptidyl-peptidase which removes N-terminal dipeptides sequentially from polypeptides having unsubstituted N-termini provided that the penultimate residue is proline.</text>
</comment>
<comment type="catalytic activity">
    <reaction>
        <text>Release of an N-terminal dipeptide, Xaa-Yaa-|-Zaa-, from a polypeptide, preferentially when Yaa is Pro, provided Zaa is neither Pro nor hydroxyproline.</text>
        <dbReference type="EC" id="3.4.14.5"/>
    </reaction>
</comment>
<comment type="subcellular location">
    <subcellularLocation>
        <location evidence="1">Vacuole membrane</location>
        <topology evidence="1">Single-pass type II membrane protein</topology>
    </subcellularLocation>
    <text evidence="1">Lysosome-like vacuoles.</text>
</comment>
<comment type="similarity">
    <text evidence="4">Belongs to the peptidase S9B family.</text>
</comment>
<feature type="chain" id="PRO_0000412167" description="Probable dipeptidyl-aminopeptidase B">
    <location>
        <begin position="1"/>
        <end position="914"/>
    </location>
</feature>
<feature type="topological domain" description="Cytoplasmic" evidence="2">
    <location>
        <begin position="1"/>
        <end position="88"/>
    </location>
</feature>
<feature type="transmembrane region" description="Helical; Signal-anchor for type II membrane protein" evidence="2">
    <location>
        <begin position="89"/>
        <end position="109"/>
    </location>
</feature>
<feature type="topological domain" description="Vacuolar" evidence="2">
    <location>
        <begin position="110"/>
        <end position="914"/>
    </location>
</feature>
<feature type="region of interest" description="Disordered" evidence="3">
    <location>
        <begin position="1"/>
        <end position="82"/>
    </location>
</feature>
<feature type="compositionally biased region" description="Low complexity" evidence="3">
    <location>
        <begin position="26"/>
        <end position="38"/>
    </location>
</feature>
<feature type="active site" description="Charge relay system" evidence="1">
    <location>
        <position position="751"/>
    </location>
</feature>
<feature type="active site" description="Charge relay system" evidence="1">
    <location>
        <position position="828"/>
    </location>
</feature>
<feature type="active site" description="Charge relay system" evidence="1">
    <location>
        <position position="861"/>
    </location>
</feature>
<feature type="glycosylation site" description="N-linked (GlcNAc...) asparagine" evidence="2">
    <location>
        <position position="128"/>
    </location>
</feature>
<feature type="glycosylation site" description="N-linked (GlcNAc...) asparagine" evidence="2">
    <location>
        <position position="295"/>
    </location>
</feature>
<feature type="glycosylation site" description="N-linked (GlcNAc...) asparagine" evidence="2">
    <location>
        <position position="347"/>
    </location>
</feature>
<feature type="glycosylation site" description="N-linked (GlcNAc...) asparagine" evidence="2">
    <location>
        <position position="617"/>
    </location>
</feature>
<feature type="glycosylation site" description="N-linked (GlcNAc...) asparagine" evidence="2">
    <location>
        <position position="810"/>
    </location>
</feature>
<feature type="glycosylation site" description="N-linked (GlcNAc...) asparagine" evidence="2">
    <location>
        <position position="897"/>
    </location>
</feature>
<organism>
    <name type="scientific">Uncinocarpus reesii (strain UAMH 1704)</name>
    <dbReference type="NCBI Taxonomy" id="336963"/>
    <lineage>
        <taxon>Eukaryota</taxon>
        <taxon>Fungi</taxon>
        <taxon>Dikarya</taxon>
        <taxon>Ascomycota</taxon>
        <taxon>Pezizomycotina</taxon>
        <taxon>Eurotiomycetes</taxon>
        <taxon>Eurotiomycetidae</taxon>
        <taxon>Onygenales</taxon>
        <taxon>Onygenaceae</taxon>
        <taxon>Uncinocarpus</taxon>
    </lineage>
</organism>
<keyword id="KW-0031">Aminopeptidase</keyword>
<keyword id="KW-0325">Glycoprotein</keyword>
<keyword id="KW-0378">Hydrolase</keyword>
<keyword id="KW-0472">Membrane</keyword>
<keyword id="KW-0645">Protease</keyword>
<keyword id="KW-1185">Reference proteome</keyword>
<keyword id="KW-0720">Serine protease</keyword>
<keyword id="KW-0735">Signal-anchor</keyword>
<keyword id="KW-0812">Transmembrane</keyword>
<keyword id="KW-1133">Transmembrane helix</keyword>
<keyword id="KW-0926">Vacuole</keyword>
<protein>
    <recommendedName>
        <fullName>Probable dipeptidyl-aminopeptidase B</fullName>
        <shortName>DPAP B</shortName>
        <ecNumber>3.4.14.5</ecNumber>
    </recommendedName>
</protein>
<name>DAPB_UNCRE</name>
<gene>
    <name type="primary">DAPB</name>
    <name type="ORF">UREG_01410</name>
</gene>
<reference key="1">
    <citation type="journal article" date="2009" name="Genome Res.">
        <title>Comparative genomic analyses of the human fungal pathogens Coccidioides and their relatives.</title>
        <authorList>
            <person name="Sharpton T.J."/>
            <person name="Stajich J.E."/>
            <person name="Rounsley S.D."/>
            <person name="Gardner M.J."/>
            <person name="Wortman J.R."/>
            <person name="Jordar V.S."/>
            <person name="Maiti R."/>
            <person name="Kodira C.D."/>
            <person name="Neafsey D.E."/>
            <person name="Zeng Q."/>
            <person name="Hung C.-Y."/>
            <person name="McMahan C."/>
            <person name="Muszewska A."/>
            <person name="Grynberg M."/>
            <person name="Mandel M.A."/>
            <person name="Kellner E.M."/>
            <person name="Barker B.M."/>
            <person name="Galgiani J.N."/>
            <person name="Orbach M.J."/>
            <person name="Kirkland T.N."/>
            <person name="Cole G.T."/>
            <person name="Henn M.R."/>
            <person name="Birren B.W."/>
            <person name="Taylor J.W."/>
        </authorList>
    </citation>
    <scope>NUCLEOTIDE SEQUENCE [LARGE SCALE GENOMIC DNA]</scope>
    <source>
        <strain>UAMH 1704</strain>
    </source>
</reference>
<sequence length="914" mass="102559">MGAEKRINDEEAQPLTGRDRSRDSIDSTSTASISLALIDQANRSTHAGRTTPPRNFGNGEKYRDNDDDNPEGGLPPPSGAQRTPKKVSIIFWLVAALCVGGWLVAFFVFMGSPKKDSDKEVVVSGAENSTVPGVVSTGGKKVDLDGVLTGFWSPRSHEISWIPGPDGEDGLLLEQDGDENAGYLRVENIRNQKSTNKKDDAVVLMKRETFKVGARRVRPSKVWPSPDLKTVLVMSDRLKNWRHSYTGNYWLFNVETQTGEPLDPGSPDGRIQLASWSPKSDSVVFTRDNNMFIRNLSSKDVKPITTDGGVNLFYGIPDWVYEEEVFSGNSATWWDNDGKFVAFLRTNESRVPEYPVQYFIPTVGRVAHAGEEHYPNTRKIKYPKAGAPNPTVNIQFFDVEKGEVFSIEMEDDLPDHDRLIIEVIWASNGKVLVRETNRESDRLSMVLVDAKDRTAKVIRSQDFSKLDGGWIEPSQSTYFIPADPGNGRPHDGYIETVPFEGFNHLAYFTPLDNPSPVFLTSGNWEVTDAPSAVDLKRGLVYFVAAKEQPTERHVYTVRLDGSDLQPIVNTKAPAYYTISLSTGAGYALLKYEGPEIPWQKVISTPANEERFEETIENNTELAGRAKDYALPSLYYQTITIDGYTLPVVERRPPNFNPDKKYPVLFHLYGGPGSQTVSKRFKVDFQSYVASNLGYIVVTVDGRGTGFIGRKARCVVRDNLGHYEAIDQIETAKAWGKRPYVDATRMAIWGWSYGGFMTLKTLERDAGQTFQYGMAVAPVTDWQFYDSIYTERYMHTPQNNPAGYANTAVSNVTALGQTVRFMVIHGTGDDNVHYQNTLTLLDKLDVDNVGNFDVHVYPDSDHGIYFHNAYKMLHERLSDWLVNAFNGEWVKIRNPVPNKSLMRRARSLLKRMSNA</sequence>
<dbReference type="EC" id="3.4.14.5"/>
<dbReference type="EMBL" id="CH476615">
    <property type="protein sequence ID" value="EEP76561.1"/>
    <property type="molecule type" value="Genomic_DNA"/>
</dbReference>
<dbReference type="RefSeq" id="XP_002541894.1">
    <property type="nucleotide sequence ID" value="XM_002541848.1"/>
</dbReference>
<dbReference type="SMR" id="C4JHY5"/>
<dbReference type="FunCoup" id="C4JHY5">
    <property type="interactions" value="278"/>
</dbReference>
<dbReference type="STRING" id="336963.C4JHY5"/>
<dbReference type="ESTHER" id="uncre-dapb">
    <property type="family name" value="DPP4N_Peptidase_S9"/>
</dbReference>
<dbReference type="MEROPS" id="S09.006"/>
<dbReference type="GlyCosmos" id="C4JHY5">
    <property type="glycosylation" value="6 sites, No reported glycans"/>
</dbReference>
<dbReference type="GeneID" id="8440664"/>
<dbReference type="KEGG" id="ure:UREG_01410"/>
<dbReference type="VEuPathDB" id="FungiDB:UREG_01410"/>
<dbReference type="eggNOG" id="KOG2100">
    <property type="taxonomic scope" value="Eukaryota"/>
</dbReference>
<dbReference type="HOGENOM" id="CLU_006105_0_1_1"/>
<dbReference type="InParanoid" id="C4JHY5"/>
<dbReference type="OMA" id="MRTPQEN"/>
<dbReference type="OrthoDB" id="16520at2759"/>
<dbReference type="Proteomes" id="UP000002058">
    <property type="component" value="Unassembled WGS sequence"/>
</dbReference>
<dbReference type="GO" id="GO:0000329">
    <property type="term" value="C:fungal-type vacuole membrane"/>
    <property type="evidence" value="ECO:0007669"/>
    <property type="project" value="EnsemblFungi"/>
</dbReference>
<dbReference type="GO" id="GO:0005886">
    <property type="term" value="C:plasma membrane"/>
    <property type="evidence" value="ECO:0007669"/>
    <property type="project" value="TreeGrafter"/>
</dbReference>
<dbReference type="GO" id="GO:0004177">
    <property type="term" value="F:aminopeptidase activity"/>
    <property type="evidence" value="ECO:0007669"/>
    <property type="project" value="UniProtKB-KW"/>
</dbReference>
<dbReference type="GO" id="GO:0008239">
    <property type="term" value="F:dipeptidyl-peptidase activity"/>
    <property type="evidence" value="ECO:0007669"/>
    <property type="project" value="UniProtKB-EC"/>
</dbReference>
<dbReference type="GO" id="GO:0008236">
    <property type="term" value="F:serine-type peptidase activity"/>
    <property type="evidence" value="ECO:0007669"/>
    <property type="project" value="UniProtKB-KW"/>
</dbReference>
<dbReference type="GO" id="GO:0006508">
    <property type="term" value="P:proteolysis"/>
    <property type="evidence" value="ECO:0007669"/>
    <property type="project" value="UniProtKB-KW"/>
</dbReference>
<dbReference type="FunFam" id="3.40.50.1820:FF:000003">
    <property type="entry name" value="Dipeptidyl peptidase 4"/>
    <property type="match status" value="1"/>
</dbReference>
<dbReference type="Gene3D" id="3.40.50.1820">
    <property type="entry name" value="alpha/beta hydrolase"/>
    <property type="match status" value="1"/>
</dbReference>
<dbReference type="Gene3D" id="2.140.10.30">
    <property type="entry name" value="Dipeptidylpeptidase IV, N-terminal domain"/>
    <property type="match status" value="1"/>
</dbReference>
<dbReference type="InterPro" id="IPR029058">
    <property type="entry name" value="AB_hydrolase_fold"/>
</dbReference>
<dbReference type="InterPro" id="IPR001375">
    <property type="entry name" value="Peptidase_S9_cat"/>
</dbReference>
<dbReference type="InterPro" id="IPR002469">
    <property type="entry name" value="Peptidase_S9B_N"/>
</dbReference>
<dbReference type="InterPro" id="IPR050278">
    <property type="entry name" value="Serine_Prot_S9B/DPPIV"/>
</dbReference>
<dbReference type="PANTHER" id="PTHR11731:SF200">
    <property type="entry name" value="DIPEPTIDYL PEPTIDASE 10, ISOFORM B"/>
    <property type="match status" value="1"/>
</dbReference>
<dbReference type="PANTHER" id="PTHR11731">
    <property type="entry name" value="PROTEASE FAMILY S9B,C DIPEPTIDYL-PEPTIDASE IV-RELATED"/>
    <property type="match status" value="1"/>
</dbReference>
<dbReference type="Pfam" id="PF00930">
    <property type="entry name" value="DPPIV_N"/>
    <property type="match status" value="1"/>
</dbReference>
<dbReference type="Pfam" id="PF00326">
    <property type="entry name" value="Peptidase_S9"/>
    <property type="match status" value="1"/>
</dbReference>
<dbReference type="SUPFAM" id="SSF53474">
    <property type="entry name" value="alpha/beta-Hydrolases"/>
    <property type="match status" value="1"/>
</dbReference>
<dbReference type="SUPFAM" id="SSF82171">
    <property type="entry name" value="DPP6 N-terminal domain-like"/>
    <property type="match status" value="1"/>
</dbReference>
<evidence type="ECO:0000250" key="1"/>
<evidence type="ECO:0000255" key="2"/>
<evidence type="ECO:0000256" key="3">
    <source>
        <dbReference type="SAM" id="MobiDB-lite"/>
    </source>
</evidence>
<evidence type="ECO:0000305" key="4"/>
<accession>C4JHY5</accession>
<proteinExistence type="inferred from homology"/>